<reference key="1">
    <citation type="submission" date="2007-09" db="EMBL/GenBank/DDBJ databases">
        <title>Complete genome sequence of Rickettsia akari.</title>
        <authorList>
            <person name="Madan A."/>
            <person name="Fahey J."/>
            <person name="Helton E."/>
            <person name="Ketteman M."/>
            <person name="Madan A."/>
            <person name="Rodrigues S."/>
            <person name="Sanchez A."/>
            <person name="Whiting M."/>
            <person name="Dasch G."/>
            <person name="Eremeeva M."/>
        </authorList>
    </citation>
    <scope>NUCLEOTIDE SEQUENCE [LARGE SCALE GENOMIC DNA]</scope>
    <source>
        <strain>Hartford</strain>
    </source>
</reference>
<protein>
    <recommendedName>
        <fullName evidence="1">Peptidyl-tRNA hydrolase</fullName>
        <shortName evidence="1">Pth</shortName>
        <ecNumber evidence="1">3.1.1.29</ecNumber>
    </recommendedName>
</protein>
<evidence type="ECO:0000255" key="1">
    <source>
        <dbReference type="HAMAP-Rule" id="MF_00083"/>
    </source>
</evidence>
<accession>A8GP84</accession>
<dbReference type="EC" id="3.1.1.29" evidence="1"/>
<dbReference type="EMBL" id="CP000847">
    <property type="protein sequence ID" value="ABV75209.1"/>
    <property type="molecule type" value="Genomic_DNA"/>
</dbReference>
<dbReference type="RefSeq" id="WP_012149839.1">
    <property type="nucleotide sequence ID" value="NC_009881.1"/>
</dbReference>
<dbReference type="SMR" id="A8GP84"/>
<dbReference type="STRING" id="293614.A1C_04745"/>
<dbReference type="KEGG" id="rak:A1C_04745"/>
<dbReference type="eggNOG" id="COG0193">
    <property type="taxonomic scope" value="Bacteria"/>
</dbReference>
<dbReference type="HOGENOM" id="CLU_062456_2_2_5"/>
<dbReference type="Proteomes" id="UP000006830">
    <property type="component" value="Chromosome"/>
</dbReference>
<dbReference type="GO" id="GO:0005737">
    <property type="term" value="C:cytoplasm"/>
    <property type="evidence" value="ECO:0007669"/>
    <property type="project" value="UniProtKB-SubCell"/>
</dbReference>
<dbReference type="GO" id="GO:0004045">
    <property type="term" value="F:peptidyl-tRNA hydrolase activity"/>
    <property type="evidence" value="ECO:0007669"/>
    <property type="project" value="UniProtKB-UniRule"/>
</dbReference>
<dbReference type="GO" id="GO:0000049">
    <property type="term" value="F:tRNA binding"/>
    <property type="evidence" value="ECO:0007669"/>
    <property type="project" value="UniProtKB-UniRule"/>
</dbReference>
<dbReference type="GO" id="GO:0006515">
    <property type="term" value="P:protein quality control for misfolded or incompletely synthesized proteins"/>
    <property type="evidence" value="ECO:0007669"/>
    <property type="project" value="UniProtKB-UniRule"/>
</dbReference>
<dbReference type="GO" id="GO:0072344">
    <property type="term" value="P:rescue of stalled ribosome"/>
    <property type="evidence" value="ECO:0007669"/>
    <property type="project" value="UniProtKB-UniRule"/>
</dbReference>
<dbReference type="CDD" id="cd00462">
    <property type="entry name" value="PTH"/>
    <property type="match status" value="1"/>
</dbReference>
<dbReference type="FunFam" id="3.40.50.1470:FF:000001">
    <property type="entry name" value="Peptidyl-tRNA hydrolase"/>
    <property type="match status" value="1"/>
</dbReference>
<dbReference type="Gene3D" id="3.40.50.1470">
    <property type="entry name" value="Peptidyl-tRNA hydrolase"/>
    <property type="match status" value="1"/>
</dbReference>
<dbReference type="HAMAP" id="MF_00083">
    <property type="entry name" value="Pept_tRNA_hydro_bact"/>
    <property type="match status" value="1"/>
</dbReference>
<dbReference type="InterPro" id="IPR001328">
    <property type="entry name" value="Pept_tRNA_hydro"/>
</dbReference>
<dbReference type="InterPro" id="IPR018171">
    <property type="entry name" value="Pept_tRNA_hydro_CS"/>
</dbReference>
<dbReference type="InterPro" id="IPR036416">
    <property type="entry name" value="Pept_tRNA_hydro_sf"/>
</dbReference>
<dbReference type="NCBIfam" id="TIGR00447">
    <property type="entry name" value="pth"/>
    <property type="match status" value="1"/>
</dbReference>
<dbReference type="PANTHER" id="PTHR17224">
    <property type="entry name" value="PEPTIDYL-TRNA HYDROLASE"/>
    <property type="match status" value="1"/>
</dbReference>
<dbReference type="PANTHER" id="PTHR17224:SF1">
    <property type="entry name" value="PEPTIDYL-TRNA HYDROLASE"/>
    <property type="match status" value="1"/>
</dbReference>
<dbReference type="Pfam" id="PF01195">
    <property type="entry name" value="Pept_tRNA_hydro"/>
    <property type="match status" value="1"/>
</dbReference>
<dbReference type="SUPFAM" id="SSF53178">
    <property type="entry name" value="Peptidyl-tRNA hydrolase-like"/>
    <property type="match status" value="1"/>
</dbReference>
<dbReference type="PROSITE" id="PS01195">
    <property type="entry name" value="PEPT_TRNA_HYDROL_1"/>
    <property type="match status" value="1"/>
</dbReference>
<dbReference type="PROSITE" id="PS01196">
    <property type="entry name" value="PEPT_TRNA_HYDROL_2"/>
    <property type="match status" value="1"/>
</dbReference>
<comment type="function">
    <text evidence="1">Hydrolyzes ribosome-free peptidyl-tRNAs (with 1 or more amino acids incorporated), which drop off the ribosome during protein synthesis, or as a result of ribosome stalling.</text>
</comment>
<comment type="function">
    <text evidence="1">Catalyzes the release of premature peptidyl moieties from peptidyl-tRNA molecules trapped in stalled 50S ribosomal subunits, and thus maintains levels of free tRNAs and 50S ribosomes.</text>
</comment>
<comment type="catalytic activity">
    <reaction evidence="1">
        <text>an N-acyl-L-alpha-aminoacyl-tRNA + H2O = an N-acyl-L-amino acid + a tRNA + H(+)</text>
        <dbReference type="Rhea" id="RHEA:54448"/>
        <dbReference type="Rhea" id="RHEA-COMP:10123"/>
        <dbReference type="Rhea" id="RHEA-COMP:13883"/>
        <dbReference type="ChEBI" id="CHEBI:15377"/>
        <dbReference type="ChEBI" id="CHEBI:15378"/>
        <dbReference type="ChEBI" id="CHEBI:59874"/>
        <dbReference type="ChEBI" id="CHEBI:78442"/>
        <dbReference type="ChEBI" id="CHEBI:138191"/>
        <dbReference type="EC" id="3.1.1.29"/>
    </reaction>
</comment>
<comment type="subunit">
    <text evidence="1">Monomer.</text>
</comment>
<comment type="subcellular location">
    <subcellularLocation>
        <location evidence="1">Cytoplasm</location>
    </subcellularLocation>
</comment>
<comment type="similarity">
    <text evidence="1">Belongs to the PTH family.</text>
</comment>
<proteinExistence type="inferred from homology"/>
<sequence length="185" mass="20886">MILVIGLGNPGKEYQYTRHNIGFIAIEKIANQYNSSFSTKKQFNCEIAETISDGQKIIFIKPTTYMNLSGKSVISVKTYYNINPAKIFVIHDDIDLETCRIKFKTGGGNGGHNGLKSIDGVIGNNYNRIRVGVGRPKNNQDVADYLLNNFLQSEYEIAMQAIDRIVNNFDLILENKLEKFKNKIV</sequence>
<organism>
    <name type="scientific">Rickettsia akari (strain Hartford)</name>
    <dbReference type="NCBI Taxonomy" id="293614"/>
    <lineage>
        <taxon>Bacteria</taxon>
        <taxon>Pseudomonadati</taxon>
        <taxon>Pseudomonadota</taxon>
        <taxon>Alphaproteobacteria</taxon>
        <taxon>Rickettsiales</taxon>
        <taxon>Rickettsiaceae</taxon>
        <taxon>Rickettsieae</taxon>
        <taxon>Rickettsia</taxon>
        <taxon>spotted fever group</taxon>
    </lineage>
</organism>
<name>PTH_RICAH</name>
<gene>
    <name evidence="1" type="primary">pth</name>
    <name type="ordered locus">A1C_04745</name>
</gene>
<keyword id="KW-0963">Cytoplasm</keyword>
<keyword id="KW-0378">Hydrolase</keyword>
<keyword id="KW-0694">RNA-binding</keyword>
<keyword id="KW-0820">tRNA-binding</keyword>
<feature type="chain" id="PRO_1000010640" description="Peptidyl-tRNA hydrolase">
    <location>
        <begin position="1"/>
        <end position="185"/>
    </location>
</feature>
<feature type="active site" description="Proton acceptor" evidence="1">
    <location>
        <position position="19"/>
    </location>
</feature>
<feature type="binding site" evidence="1">
    <location>
        <position position="14"/>
    </location>
    <ligand>
        <name>tRNA</name>
        <dbReference type="ChEBI" id="CHEBI:17843"/>
    </ligand>
</feature>
<feature type="binding site" evidence="1">
    <location>
        <position position="65"/>
    </location>
    <ligand>
        <name>tRNA</name>
        <dbReference type="ChEBI" id="CHEBI:17843"/>
    </ligand>
</feature>
<feature type="binding site" evidence="1">
    <location>
        <position position="67"/>
    </location>
    <ligand>
        <name>tRNA</name>
        <dbReference type="ChEBI" id="CHEBI:17843"/>
    </ligand>
</feature>
<feature type="binding site" evidence="1">
    <location>
        <position position="113"/>
    </location>
    <ligand>
        <name>tRNA</name>
        <dbReference type="ChEBI" id="CHEBI:17843"/>
    </ligand>
</feature>
<feature type="site" description="Discriminates between blocked and unblocked aminoacyl-tRNA" evidence="1">
    <location>
        <position position="9"/>
    </location>
</feature>
<feature type="site" description="Stabilizes the basic form of H active site to accept a proton" evidence="1">
    <location>
        <position position="92"/>
    </location>
</feature>